<keyword id="KW-1003">Cell membrane</keyword>
<keyword id="KW-0472">Membrane</keyword>
<keyword id="KW-1185">Reference proteome</keyword>
<keyword id="KW-0812">Transmembrane</keyword>
<keyword id="KW-1133">Transmembrane helix</keyword>
<feature type="chain" id="PRO_0000049696" description="Uncharacterized protein YphE">
    <location>
        <begin position="1"/>
        <end position="67"/>
    </location>
</feature>
<feature type="transmembrane region" description="Helical" evidence="1">
    <location>
        <begin position="8"/>
        <end position="28"/>
    </location>
</feature>
<feature type="transmembrane region" description="Helical" evidence="1">
    <location>
        <begin position="41"/>
        <end position="61"/>
    </location>
</feature>
<reference key="1">
    <citation type="journal article" date="1996" name="Microbiology">
        <title>Sequence analysis of the Bacillus subtilis chromosome region between the serA and kdg loci cloned in a yeast artificial chromosome.</title>
        <authorList>
            <person name="Sorokin A.V."/>
            <person name="Azevedo V."/>
            <person name="Zumstein E."/>
            <person name="Galleron N."/>
            <person name="Ehrlich S.D."/>
            <person name="Serror P."/>
        </authorList>
    </citation>
    <scope>NUCLEOTIDE SEQUENCE [GENOMIC DNA]</scope>
    <source>
        <strain>168 / Marburg / ATCC 6051 / DSM 10 / JCM 1465 / NBRC 13719 / NCIMB 3610 / NRRL NRS-744 / VKM B-501</strain>
    </source>
</reference>
<reference key="2">
    <citation type="journal article" date="1997" name="Nature">
        <title>The complete genome sequence of the Gram-positive bacterium Bacillus subtilis.</title>
        <authorList>
            <person name="Kunst F."/>
            <person name="Ogasawara N."/>
            <person name="Moszer I."/>
            <person name="Albertini A.M."/>
            <person name="Alloni G."/>
            <person name="Azevedo V."/>
            <person name="Bertero M.G."/>
            <person name="Bessieres P."/>
            <person name="Bolotin A."/>
            <person name="Borchert S."/>
            <person name="Borriss R."/>
            <person name="Boursier L."/>
            <person name="Brans A."/>
            <person name="Braun M."/>
            <person name="Brignell S.C."/>
            <person name="Bron S."/>
            <person name="Brouillet S."/>
            <person name="Bruschi C.V."/>
            <person name="Caldwell B."/>
            <person name="Capuano V."/>
            <person name="Carter N.M."/>
            <person name="Choi S.-K."/>
            <person name="Codani J.-J."/>
            <person name="Connerton I.F."/>
            <person name="Cummings N.J."/>
            <person name="Daniel R.A."/>
            <person name="Denizot F."/>
            <person name="Devine K.M."/>
            <person name="Duesterhoeft A."/>
            <person name="Ehrlich S.D."/>
            <person name="Emmerson P.T."/>
            <person name="Entian K.-D."/>
            <person name="Errington J."/>
            <person name="Fabret C."/>
            <person name="Ferrari E."/>
            <person name="Foulger D."/>
            <person name="Fritz C."/>
            <person name="Fujita M."/>
            <person name="Fujita Y."/>
            <person name="Fuma S."/>
            <person name="Galizzi A."/>
            <person name="Galleron N."/>
            <person name="Ghim S.-Y."/>
            <person name="Glaser P."/>
            <person name="Goffeau A."/>
            <person name="Golightly E.J."/>
            <person name="Grandi G."/>
            <person name="Guiseppi G."/>
            <person name="Guy B.J."/>
            <person name="Haga K."/>
            <person name="Haiech J."/>
            <person name="Harwood C.R."/>
            <person name="Henaut A."/>
            <person name="Hilbert H."/>
            <person name="Holsappel S."/>
            <person name="Hosono S."/>
            <person name="Hullo M.-F."/>
            <person name="Itaya M."/>
            <person name="Jones L.-M."/>
            <person name="Joris B."/>
            <person name="Karamata D."/>
            <person name="Kasahara Y."/>
            <person name="Klaerr-Blanchard M."/>
            <person name="Klein C."/>
            <person name="Kobayashi Y."/>
            <person name="Koetter P."/>
            <person name="Koningstein G."/>
            <person name="Krogh S."/>
            <person name="Kumano M."/>
            <person name="Kurita K."/>
            <person name="Lapidus A."/>
            <person name="Lardinois S."/>
            <person name="Lauber J."/>
            <person name="Lazarevic V."/>
            <person name="Lee S.-M."/>
            <person name="Levine A."/>
            <person name="Liu H."/>
            <person name="Masuda S."/>
            <person name="Mauel C."/>
            <person name="Medigue C."/>
            <person name="Medina N."/>
            <person name="Mellado R.P."/>
            <person name="Mizuno M."/>
            <person name="Moestl D."/>
            <person name="Nakai S."/>
            <person name="Noback M."/>
            <person name="Noone D."/>
            <person name="O'Reilly M."/>
            <person name="Ogawa K."/>
            <person name="Ogiwara A."/>
            <person name="Oudega B."/>
            <person name="Park S.-H."/>
            <person name="Parro V."/>
            <person name="Pohl T.M."/>
            <person name="Portetelle D."/>
            <person name="Porwollik S."/>
            <person name="Prescott A.M."/>
            <person name="Presecan E."/>
            <person name="Pujic P."/>
            <person name="Purnelle B."/>
            <person name="Rapoport G."/>
            <person name="Rey M."/>
            <person name="Reynolds S."/>
            <person name="Rieger M."/>
            <person name="Rivolta C."/>
            <person name="Rocha E."/>
            <person name="Roche B."/>
            <person name="Rose M."/>
            <person name="Sadaie Y."/>
            <person name="Sato T."/>
            <person name="Scanlan E."/>
            <person name="Schleich S."/>
            <person name="Schroeter R."/>
            <person name="Scoffone F."/>
            <person name="Sekiguchi J."/>
            <person name="Sekowska A."/>
            <person name="Seror S.J."/>
            <person name="Serror P."/>
            <person name="Shin B.-S."/>
            <person name="Soldo B."/>
            <person name="Sorokin A."/>
            <person name="Tacconi E."/>
            <person name="Takagi T."/>
            <person name="Takahashi H."/>
            <person name="Takemaru K."/>
            <person name="Takeuchi M."/>
            <person name="Tamakoshi A."/>
            <person name="Tanaka T."/>
            <person name="Terpstra P."/>
            <person name="Tognoni A."/>
            <person name="Tosato V."/>
            <person name="Uchiyama S."/>
            <person name="Vandenbol M."/>
            <person name="Vannier F."/>
            <person name="Vassarotti A."/>
            <person name="Viari A."/>
            <person name="Wambutt R."/>
            <person name="Wedler E."/>
            <person name="Wedler H."/>
            <person name="Weitzenegger T."/>
            <person name="Winters P."/>
            <person name="Wipat A."/>
            <person name="Yamamoto H."/>
            <person name="Yamane K."/>
            <person name="Yasumoto K."/>
            <person name="Yata K."/>
            <person name="Yoshida K."/>
            <person name="Yoshikawa H.-F."/>
            <person name="Zumstein E."/>
            <person name="Yoshikawa H."/>
            <person name="Danchin A."/>
        </authorList>
    </citation>
    <scope>NUCLEOTIDE SEQUENCE [LARGE SCALE GENOMIC DNA]</scope>
    <source>
        <strain>168</strain>
    </source>
</reference>
<name>YPHE_BACSU</name>
<comment type="subcellular location">
    <subcellularLocation>
        <location evidence="2">Cell membrane</location>
        <topology evidence="2">Multi-pass membrane protein</topology>
    </subcellularLocation>
</comment>
<dbReference type="EMBL" id="L47648">
    <property type="protein sequence ID" value="AAC83968.1"/>
    <property type="molecule type" value="Genomic_DNA"/>
</dbReference>
<dbReference type="EMBL" id="AL009126">
    <property type="protein sequence ID" value="CAB14198.1"/>
    <property type="molecule type" value="Genomic_DNA"/>
</dbReference>
<dbReference type="PIR" id="B69936">
    <property type="entry name" value="B69936"/>
</dbReference>
<dbReference type="RefSeq" id="NP_390163.1">
    <property type="nucleotide sequence ID" value="NC_000964.3"/>
</dbReference>
<dbReference type="RefSeq" id="WP_004399143.1">
    <property type="nucleotide sequence ID" value="NZ_OZ025638.1"/>
</dbReference>
<dbReference type="FunCoup" id="P50744">
    <property type="interactions" value="62"/>
</dbReference>
<dbReference type="STRING" id="224308.BSU22820"/>
<dbReference type="PaxDb" id="224308-BSU22820"/>
<dbReference type="EnsemblBacteria" id="CAB14198">
    <property type="protein sequence ID" value="CAB14198"/>
    <property type="gene ID" value="BSU_22820"/>
</dbReference>
<dbReference type="GeneID" id="938993"/>
<dbReference type="KEGG" id="bsu:BSU22820"/>
<dbReference type="PATRIC" id="fig|224308.179.peg.2487"/>
<dbReference type="InParanoid" id="P50744"/>
<dbReference type="OrthoDB" id="2476435at2"/>
<dbReference type="BioCyc" id="BSUB:BSU22820-MONOMER"/>
<dbReference type="Proteomes" id="UP000001570">
    <property type="component" value="Chromosome"/>
</dbReference>
<dbReference type="GO" id="GO:0005886">
    <property type="term" value="C:plasma membrane"/>
    <property type="evidence" value="ECO:0007669"/>
    <property type="project" value="UniProtKB-SubCell"/>
</dbReference>
<dbReference type="InterPro" id="IPR020076">
    <property type="entry name" value="DUF2768"/>
</dbReference>
<dbReference type="Pfam" id="PF10966">
    <property type="entry name" value="DUF2768"/>
    <property type="match status" value="1"/>
</dbReference>
<evidence type="ECO:0000255" key="1"/>
<evidence type="ECO:0000305" key="2"/>
<sequence>MNLALMKMWFALGSMGLMFLAVASIYLSRFKCQNRFLKIAISSFAYMCMLISGIIVFVVVFSGPVNE</sequence>
<accession>P50744</accession>
<gene>
    <name type="primary">yphE</name>
    <name type="ordered locus">BSU22820</name>
</gene>
<proteinExistence type="predicted"/>
<organism>
    <name type="scientific">Bacillus subtilis (strain 168)</name>
    <dbReference type="NCBI Taxonomy" id="224308"/>
    <lineage>
        <taxon>Bacteria</taxon>
        <taxon>Bacillati</taxon>
        <taxon>Bacillota</taxon>
        <taxon>Bacilli</taxon>
        <taxon>Bacillales</taxon>
        <taxon>Bacillaceae</taxon>
        <taxon>Bacillus</taxon>
    </lineage>
</organism>
<protein>
    <recommendedName>
        <fullName>Uncharacterized protein YphE</fullName>
    </recommendedName>
</protein>